<reference key="1">
    <citation type="submission" date="2008-02" db="EMBL/GenBank/DDBJ databases">
        <title>Complete sequence of Pseudomonas putida W619.</title>
        <authorList>
            <person name="Copeland A."/>
            <person name="Lucas S."/>
            <person name="Lapidus A."/>
            <person name="Barry K."/>
            <person name="Detter J.C."/>
            <person name="Glavina del Rio T."/>
            <person name="Dalin E."/>
            <person name="Tice H."/>
            <person name="Pitluck S."/>
            <person name="Chain P."/>
            <person name="Malfatti S."/>
            <person name="Shin M."/>
            <person name="Vergez L."/>
            <person name="Schmutz J."/>
            <person name="Larimer F."/>
            <person name="Land M."/>
            <person name="Hauser L."/>
            <person name="Kyrpides N."/>
            <person name="Kim E."/>
            <person name="Taghavi S."/>
            <person name="Vangronsveld D."/>
            <person name="van der Lelie D."/>
            <person name="Richardson P."/>
        </authorList>
    </citation>
    <scope>NUCLEOTIDE SEQUENCE [LARGE SCALE GENOMIC DNA]</scope>
    <source>
        <strain>W619</strain>
    </source>
</reference>
<accession>B1JAD5</accession>
<gene>
    <name evidence="1" type="primary">miaA</name>
    <name type="ordered locus">PputW619_4686</name>
</gene>
<proteinExistence type="inferred from homology"/>
<name>MIAA_PSEPW</name>
<sequence>MSGKPPAIFLMGPTAAGKTDLAIELTKVLPCELISVDSALVYRGMDIGSAKPSREVLAAHPHRLIDIRDPAESYSAAQFRTDALQAMAEITARGKVPLLVGGTMLYYKALIDGLADMPPADAAVRAALEAQAQALGLTELHRQLAEVDPESAARIHPNDPQRLIRALEVFQVSGESMTAHRQRQFAESSGADAGAGGHLPYTVASLAIAPTDRHILHQRIALRFSQMLEQGFVDEVRSLRARSDLHAGLPSIRAVGYRQVWDYLDGKLTENEMRERGIIATRQLAKRQFTWLRGWSDVHWLDSLACDNLSRTLKYLGAISILS</sequence>
<protein>
    <recommendedName>
        <fullName evidence="1">tRNA dimethylallyltransferase</fullName>
        <ecNumber evidence="1">2.5.1.75</ecNumber>
    </recommendedName>
    <alternativeName>
        <fullName evidence="1">Dimethylallyl diphosphate:tRNA dimethylallyltransferase</fullName>
        <shortName evidence="1">DMAPP:tRNA dimethylallyltransferase</shortName>
        <shortName evidence="1">DMATase</shortName>
    </alternativeName>
    <alternativeName>
        <fullName evidence="1">Isopentenyl-diphosphate:tRNA isopentenyltransferase</fullName>
        <shortName evidence="1">IPP transferase</shortName>
        <shortName evidence="1">IPPT</shortName>
        <shortName evidence="1">IPTase</shortName>
    </alternativeName>
</protein>
<dbReference type="EC" id="2.5.1.75" evidence="1"/>
<dbReference type="EMBL" id="CP000949">
    <property type="protein sequence ID" value="ACA75163.1"/>
    <property type="molecule type" value="Genomic_DNA"/>
</dbReference>
<dbReference type="SMR" id="B1JAD5"/>
<dbReference type="STRING" id="390235.PputW619_4686"/>
<dbReference type="KEGG" id="ppw:PputW619_4686"/>
<dbReference type="eggNOG" id="COG0324">
    <property type="taxonomic scope" value="Bacteria"/>
</dbReference>
<dbReference type="HOGENOM" id="CLU_032616_0_0_6"/>
<dbReference type="OrthoDB" id="9776390at2"/>
<dbReference type="GO" id="GO:0005524">
    <property type="term" value="F:ATP binding"/>
    <property type="evidence" value="ECO:0007669"/>
    <property type="project" value="UniProtKB-UniRule"/>
</dbReference>
<dbReference type="GO" id="GO:0052381">
    <property type="term" value="F:tRNA dimethylallyltransferase activity"/>
    <property type="evidence" value="ECO:0007669"/>
    <property type="project" value="UniProtKB-UniRule"/>
</dbReference>
<dbReference type="GO" id="GO:0006400">
    <property type="term" value="P:tRNA modification"/>
    <property type="evidence" value="ECO:0007669"/>
    <property type="project" value="TreeGrafter"/>
</dbReference>
<dbReference type="FunFam" id="1.10.20.140:FF:000001">
    <property type="entry name" value="tRNA dimethylallyltransferase"/>
    <property type="match status" value="1"/>
</dbReference>
<dbReference type="Gene3D" id="1.10.20.140">
    <property type="match status" value="1"/>
</dbReference>
<dbReference type="Gene3D" id="3.40.50.300">
    <property type="entry name" value="P-loop containing nucleotide triphosphate hydrolases"/>
    <property type="match status" value="1"/>
</dbReference>
<dbReference type="HAMAP" id="MF_00185">
    <property type="entry name" value="IPP_trans"/>
    <property type="match status" value="1"/>
</dbReference>
<dbReference type="InterPro" id="IPR039657">
    <property type="entry name" value="Dimethylallyltransferase"/>
</dbReference>
<dbReference type="InterPro" id="IPR018022">
    <property type="entry name" value="IPT"/>
</dbReference>
<dbReference type="InterPro" id="IPR027417">
    <property type="entry name" value="P-loop_NTPase"/>
</dbReference>
<dbReference type="NCBIfam" id="TIGR00174">
    <property type="entry name" value="miaA"/>
    <property type="match status" value="1"/>
</dbReference>
<dbReference type="PANTHER" id="PTHR11088">
    <property type="entry name" value="TRNA DIMETHYLALLYLTRANSFERASE"/>
    <property type="match status" value="1"/>
</dbReference>
<dbReference type="PANTHER" id="PTHR11088:SF60">
    <property type="entry name" value="TRNA DIMETHYLALLYLTRANSFERASE"/>
    <property type="match status" value="1"/>
</dbReference>
<dbReference type="Pfam" id="PF01715">
    <property type="entry name" value="IPPT"/>
    <property type="match status" value="1"/>
</dbReference>
<dbReference type="SUPFAM" id="SSF52540">
    <property type="entry name" value="P-loop containing nucleoside triphosphate hydrolases"/>
    <property type="match status" value="1"/>
</dbReference>
<comment type="function">
    <text evidence="1">Catalyzes the transfer of a dimethylallyl group onto the adenine at position 37 in tRNAs that read codons beginning with uridine, leading to the formation of N6-(dimethylallyl)adenosine (i(6)A).</text>
</comment>
<comment type="catalytic activity">
    <reaction evidence="1">
        <text>adenosine(37) in tRNA + dimethylallyl diphosphate = N(6)-dimethylallyladenosine(37) in tRNA + diphosphate</text>
        <dbReference type="Rhea" id="RHEA:26482"/>
        <dbReference type="Rhea" id="RHEA-COMP:10162"/>
        <dbReference type="Rhea" id="RHEA-COMP:10375"/>
        <dbReference type="ChEBI" id="CHEBI:33019"/>
        <dbReference type="ChEBI" id="CHEBI:57623"/>
        <dbReference type="ChEBI" id="CHEBI:74411"/>
        <dbReference type="ChEBI" id="CHEBI:74415"/>
        <dbReference type="EC" id="2.5.1.75"/>
    </reaction>
</comment>
<comment type="cofactor">
    <cofactor evidence="1">
        <name>Mg(2+)</name>
        <dbReference type="ChEBI" id="CHEBI:18420"/>
    </cofactor>
</comment>
<comment type="subunit">
    <text evidence="1">Monomer.</text>
</comment>
<comment type="similarity">
    <text evidence="1">Belongs to the IPP transferase family.</text>
</comment>
<evidence type="ECO:0000255" key="1">
    <source>
        <dbReference type="HAMAP-Rule" id="MF_00185"/>
    </source>
</evidence>
<feature type="chain" id="PRO_1000098679" description="tRNA dimethylallyltransferase">
    <location>
        <begin position="1"/>
        <end position="323"/>
    </location>
</feature>
<feature type="region of interest" description="Interaction with substrate tRNA" evidence="1">
    <location>
        <begin position="37"/>
        <end position="40"/>
    </location>
</feature>
<feature type="region of interest" description="Interaction with substrate tRNA" evidence="1">
    <location>
        <begin position="161"/>
        <end position="165"/>
    </location>
</feature>
<feature type="binding site" evidence="1">
    <location>
        <begin position="12"/>
        <end position="19"/>
    </location>
    <ligand>
        <name>ATP</name>
        <dbReference type="ChEBI" id="CHEBI:30616"/>
    </ligand>
</feature>
<feature type="binding site" evidence="1">
    <location>
        <begin position="14"/>
        <end position="19"/>
    </location>
    <ligand>
        <name>substrate</name>
    </ligand>
</feature>
<feature type="site" description="Interaction with substrate tRNA" evidence="1">
    <location>
        <position position="103"/>
    </location>
</feature>
<feature type="site" description="Interaction with substrate tRNA" evidence="1">
    <location>
        <position position="125"/>
    </location>
</feature>
<organism>
    <name type="scientific">Pseudomonas putida (strain W619)</name>
    <dbReference type="NCBI Taxonomy" id="390235"/>
    <lineage>
        <taxon>Bacteria</taxon>
        <taxon>Pseudomonadati</taxon>
        <taxon>Pseudomonadota</taxon>
        <taxon>Gammaproteobacteria</taxon>
        <taxon>Pseudomonadales</taxon>
        <taxon>Pseudomonadaceae</taxon>
        <taxon>Pseudomonas</taxon>
    </lineage>
</organism>
<keyword id="KW-0067">ATP-binding</keyword>
<keyword id="KW-0460">Magnesium</keyword>
<keyword id="KW-0547">Nucleotide-binding</keyword>
<keyword id="KW-0808">Transferase</keyword>
<keyword id="KW-0819">tRNA processing</keyword>